<gene>
    <name evidence="1" type="primary">recA</name>
    <name type="ordered locus">VC_0543</name>
</gene>
<accession>P45383</accession>
<accession>Q9KUH8</accession>
<proteinExistence type="inferred from homology"/>
<reference key="1">
    <citation type="journal article" date="1994" name="Mol. Gen. Genet.">
        <title>Gene sequence of recA+ and construction of recA mutants of Vibrio cholerae.</title>
        <authorList>
            <person name="Stroeher U.H."/>
            <person name="Lech A.J."/>
            <person name="Manning P.A."/>
        </authorList>
    </citation>
    <scope>NUCLEOTIDE SEQUENCE [GENOMIC DNA]</scope>
    <source>
        <strain>El Tor O17 / Serotype O1</strain>
    </source>
</reference>
<reference key="2">
    <citation type="journal article" date="1995" name="Gene">
        <title>The deduced Vibrio cholerae RecA amino-acid sequence.</title>
        <authorList>
            <person name="Margraf R.L."/>
            <person name="Roca A.I."/>
            <person name="Cox M.M."/>
        </authorList>
    </citation>
    <scope>NUCLEOTIDE SEQUENCE [GENOMIC DNA]</scope>
    <source>
        <strain>2740-80</strain>
    </source>
</reference>
<reference key="3">
    <citation type="submission" date="1995-05" db="EMBL/GenBank/DDBJ databases">
        <authorList>
            <person name="Bhasin N."/>
            <person name="Gupta N."/>
            <person name="Ghosh A."/>
        </authorList>
    </citation>
    <scope>NUCLEOTIDE SEQUENCE [GENOMIC DNA]</scope>
    <source>
        <strain>ATCC 25870 / Classical Inaba 569B / Serotype O1</strain>
    </source>
</reference>
<reference key="4">
    <citation type="journal article" date="2000" name="Nature">
        <title>DNA sequence of both chromosomes of the cholera pathogen Vibrio cholerae.</title>
        <authorList>
            <person name="Heidelberg J.F."/>
            <person name="Eisen J.A."/>
            <person name="Nelson W.C."/>
            <person name="Clayton R.A."/>
            <person name="Gwinn M.L."/>
            <person name="Dodson R.J."/>
            <person name="Haft D.H."/>
            <person name="Hickey E.K."/>
            <person name="Peterson J.D."/>
            <person name="Umayam L.A."/>
            <person name="Gill S.R."/>
            <person name="Nelson K.E."/>
            <person name="Read T.D."/>
            <person name="Tettelin H."/>
            <person name="Richardson D.L."/>
            <person name="Ermolaeva M.D."/>
            <person name="Vamathevan J.J."/>
            <person name="Bass S."/>
            <person name="Qin H."/>
            <person name="Dragoi I."/>
            <person name="Sellers P."/>
            <person name="McDonald L.A."/>
            <person name="Utterback T.R."/>
            <person name="Fleischmann R.D."/>
            <person name="Nierman W.C."/>
            <person name="White O."/>
            <person name="Salzberg S.L."/>
            <person name="Smith H.O."/>
            <person name="Colwell R.R."/>
            <person name="Mekalanos J.J."/>
            <person name="Venter J.C."/>
            <person name="Fraser C.M."/>
        </authorList>
    </citation>
    <scope>NUCLEOTIDE SEQUENCE [LARGE SCALE GENOMIC DNA]</scope>
    <source>
        <strain>ATCC 39315 / El Tor Inaba N16961</strain>
    </source>
</reference>
<sequence>MDENKQKALAAALGQIEKQFGKGSIMRLGDNRAMDVETISTGSLSLDIALGAGGLPMGRIVEIFGPESSGKTTLTLELIAAAQREGKTCAFIDAEHALDPVYAKKLGVNIDELLVSQPDTGEQALEICDALARSGAVDVIVVDSVAALTPKAEIEGEMGDSHMGLQARMLSQAMRKLTGNLKQSNCMCIFINQIRMKIGVMFGNPETTTGGNALKFYASVRLDIRRTGAIKEGEEVVGNETRIKVVKNKIAAPFKEANTQIMYGQGFNREGELIDLGVKHKMVEKSGAWYSYNGDKIGQGKANACKYLKENPEIAKTLDKKLREMLLNPENMQLIAETSSAADDVEFGAVPEEF</sequence>
<evidence type="ECO:0000255" key="1">
    <source>
        <dbReference type="HAMAP-Rule" id="MF_00268"/>
    </source>
</evidence>
<evidence type="ECO:0000305" key="2"/>
<keyword id="KW-0067">ATP-binding</keyword>
<keyword id="KW-0963">Cytoplasm</keyword>
<keyword id="KW-0227">DNA damage</keyword>
<keyword id="KW-0233">DNA recombination</keyword>
<keyword id="KW-0234">DNA repair</keyword>
<keyword id="KW-0238">DNA-binding</keyword>
<keyword id="KW-0547">Nucleotide-binding</keyword>
<keyword id="KW-1185">Reference proteome</keyword>
<keyword id="KW-0742">SOS response</keyword>
<organism>
    <name type="scientific">Vibrio cholerae serotype O1 (strain ATCC 39315 / El Tor Inaba N16961)</name>
    <dbReference type="NCBI Taxonomy" id="243277"/>
    <lineage>
        <taxon>Bacteria</taxon>
        <taxon>Pseudomonadati</taxon>
        <taxon>Pseudomonadota</taxon>
        <taxon>Gammaproteobacteria</taxon>
        <taxon>Vibrionales</taxon>
        <taxon>Vibrionaceae</taxon>
        <taxon>Vibrio</taxon>
    </lineage>
</organism>
<dbReference type="EMBL" id="X71969">
    <property type="protein sequence ID" value="CAA50764.1"/>
    <property type="status" value="ALT_SEQ"/>
    <property type="molecule type" value="Genomic_DNA"/>
</dbReference>
<dbReference type="EMBL" id="U10162">
    <property type="protein sequence ID" value="AAC43291.1"/>
    <property type="molecule type" value="Genomic_DNA"/>
</dbReference>
<dbReference type="EMBL" id="L42384">
    <property type="protein sequence ID" value="AAB59100.1"/>
    <property type="molecule type" value="Genomic_DNA"/>
</dbReference>
<dbReference type="EMBL" id="AE003852">
    <property type="protein sequence ID" value="AAF93711.1"/>
    <property type="status" value="ALT_INIT"/>
    <property type="molecule type" value="Genomic_DNA"/>
</dbReference>
<dbReference type="PIR" id="E82310">
    <property type="entry name" value="E82310"/>
</dbReference>
<dbReference type="PIR" id="S46274">
    <property type="entry name" value="S46274"/>
</dbReference>
<dbReference type="SMR" id="P45383"/>
<dbReference type="STRING" id="243277.VC_0543"/>
<dbReference type="DNASU" id="2615212"/>
<dbReference type="EnsemblBacteria" id="AAF93711">
    <property type="protein sequence ID" value="AAF93711"/>
    <property type="gene ID" value="VC_0543"/>
</dbReference>
<dbReference type="KEGG" id="vch:VC_0543"/>
<dbReference type="eggNOG" id="COG0468">
    <property type="taxonomic scope" value="Bacteria"/>
</dbReference>
<dbReference type="HOGENOM" id="CLU_040469_3_2_6"/>
<dbReference type="Proteomes" id="UP000000584">
    <property type="component" value="Chromosome 1"/>
</dbReference>
<dbReference type="GO" id="GO:0005737">
    <property type="term" value="C:cytoplasm"/>
    <property type="evidence" value="ECO:0007669"/>
    <property type="project" value="UniProtKB-SubCell"/>
</dbReference>
<dbReference type="GO" id="GO:0005524">
    <property type="term" value="F:ATP binding"/>
    <property type="evidence" value="ECO:0007669"/>
    <property type="project" value="UniProtKB-UniRule"/>
</dbReference>
<dbReference type="GO" id="GO:0016887">
    <property type="term" value="F:ATP hydrolysis activity"/>
    <property type="evidence" value="ECO:0007669"/>
    <property type="project" value="InterPro"/>
</dbReference>
<dbReference type="GO" id="GO:0140664">
    <property type="term" value="F:ATP-dependent DNA damage sensor activity"/>
    <property type="evidence" value="ECO:0007669"/>
    <property type="project" value="InterPro"/>
</dbReference>
<dbReference type="GO" id="GO:0003684">
    <property type="term" value="F:damaged DNA binding"/>
    <property type="evidence" value="ECO:0007669"/>
    <property type="project" value="UniProtKB-UniRule"/>
</dbReference>
<dbReference type="GO" id="GO:0003697">
    <property type="term" value="F:single-stranded DNA binding"/>
    <property type="evidence" value="ECO:0007669"/>
    <property type="project" value="UniProtKB-UniRule"/>
</dbReference>
<dbReference type="GO" id="GO:0006310">
    <property type="term" value="P:DNA recombination"/>
    <property type="evidence" value="ECO:0000315"/>
    <property type="project" value="TIGR"/>
</dbReference>
<dbReference type="GO" id="GO:0006281">
    <property type="term" value="P:DNA repair"/>
    <property type="evidence" value="ECO:0000315"/>
    <property type="project" value="TIGR"/>
</dbReference>
<dbReference type="GO" id="GO:0009432">
    <property type="term" value="P:SOS response"/>
    <property type="evidence" value="ECO:0007669"/>
    <property type="project" value="UniProtKB-UniRule"/>
</dbReference>
<dbReference type="CDD" id="cd00983">
    <property type="entry name" value="RecA"/>
    <property type="match status" value="1"/>
</dbReference>
<dbReference type="FunFam" id="3.40.50.300:FF:000087">
    <property type="entry name" value="Recombinase RecA"/>
    <property type="match status" value="1"/>
</dbReference>
<dbReference type="Gene3D" id="3.40.50.300">
    <property type="entry name" value="P-loop containing nucleotide triphosphate hydrolases"/>
    <property type="match status" value="1"/>
</dbReference>
<dbReference type="HAMAP" id="MF_00268">
    <property type="entry name" value="RecA"/>
    <property type="match status" value="1"/>
</dbReference>
<dbReference type="InterPro" id="IPR003593">
    <property type="entry name" value="AAA+_ATPase"/>
</dbReference>
<dbReference type="InterPro" id="IPR013765">
    <property type="entry name" value="DNA_recomb/repair_RecA"/>
</dbReference>
<dbReference type="InterPro" id="IPR020584">
    <property type="entry name" value="DNA_recomb/repair_RecA_CS"/>
</dbReference>
<dbReference type="InterPro" id="IPR027417">
    <property type="entry name" value="P-loop_NTPase"/>
</dbReference>
<dbReference type="InterPro" id="IPR049261">
    <property type="entry name" value="RecA-like_C"/>
</dbReference>
<dbReference type="InterPro" id="IPR049428">
    <property type="entry name" value="RecA-like_N"/>
</dbReference>
<dbReference type="InterPro" id="IPR020588">
    <property type="entry name" value="RecA_ATP-bd"/>
</dbReference>
<dbReference type="InterPro" id="IPR023400">
    <property type="entry name" value="RecA_C_sf"/>
</dbReference>
<dbReference type="InterPro" id="IPR020587">
    <property type="entry name" value="RecA_monomer-monomer_interface"/>
</dbReference>
<dbReference type="NCBIfam" id="TIGR02012">
    <property type="entry name" value="tigrfam_recA"/>
    <property type="match status" value="1"/>
</dbReference>
<dbReference type="PANTHER" id="PTHR45900:SF1">
    <property type="entry name" value="MITOCHONDRIAL DNA REPAIR PROTEIN RECA HOMOLOG-RELATED"/>
    <property type="match status" value="1"/>
</dbReference>
<dbReference type="PANTHER" id="PTHR45900">
    <property type="entry name" value="RECA"/>
    <property type="match status" value="1"/>
</dbReference>
<dbReference type="Pfam" id="PF00154">
    <property type="entry name" value="RecA"/>
    <property type="match status" value="1"/>
</dbReference>
<dbReference type="Pfam" id="PF21096">
    <property type="entry name" value="RecA_C"/>
    <property type="match status" value="1"/>
</dbReference>
<dbReference type="PRINTS" id="PR00142">
    <property type="entry name" value="RECA"/>
</dbReference>
<dbReference type="SMART" id="SM00382">
    <property type="entry name" value="AAA"/>
    <property type="match status" value="1"/>
</dbReference>
<dbReference type="SUPFAM" id="SSF52540">
    <property type="entry name" value="P-loop containing nucleoside triphosphate hydrolases"/>
    <property type="match status" value="1"/>
</dbReference>
<dbReference type="SUPFAM" id="SSF54752">
    <property type="entry name" value="RecA protein, C-terminal domain"/>
    <property type="match status" value="1"/>
</dbReference>
<dbReference type="PROSITE" id="PS00321">
    <property type="entry name" value="RECA_1"/>
    <property type="match status" value="1"/>
</dbReference>
<dbReference type="PROSITE" id="PS50162">
    <property type="entry name" value="RECA_2"/>
    <property type="match status" value="1"/>
</dbReference>
<dbReference type="PROSITE" id="PS50163">
    <property type="entry name" value="RECA_3"/>
    <property type="match status" value="1"/>
</dbReference>
<name>RECA_VIBCH</name>
<protein>
    <recommendedName>
        <fullName evidence="1">Protein RecA</fullName>
    </recommendedName>
    <alternativeName>
        <fullName evidence="1">Recombinase A</fullName>
    </alternativeName>
</protein>
<comment type="function">
    <text>Can catalyze the hydrolysis of ATP in the presence of single-stranded DNA, the ATP-dependent uptake of single-stranded DNA by duplex DNA, and the ATP-dependent hybridization of homologous single-stranded DNAs. It interacts with LexA causing its activation and leading to its autocatalytic cleavage.</text>
</comment>
<comment type="subcellular location">
    <subcellularLocation>
        <location evidence="1">Cytoplasm</location>
    </subcellularLocation>
</comment>
<comment type="similarity">
    <text evidence="1">Belongs to the RecA family.</text>
</comment>
<comment type="sequence caution" evidence="2">
    <conflict type="erroneous initiation">
        <sequence resource="EMBL-CDS" id="AAF93711"/>
    </conflict>
</comment>
<comment type="sequence caution" evidence="2">
    <conflict type="miscellaneous discrepancy">
        <sequence resource="EMBL-CDS" id="CAA50764"/>
    </conflict>
    <text>Submitters have revised their sequence in positions 27, 49, 52 and 64 to agree with the one shown in this entry, but have not submitted the revised DNA sequence.</text>
</comment>
<feature type="chain" id="PRO_0000122891" description="Protein RecA">
    <location>
        <begin position="1"/>
        <end position="354"/>
    </location>
</feature>
<feature type="binding site" evidence="1">
    <location>
        <begin position="65"/>
        <end position="72"/>
    </location>
    <ligand>
        <name>ATP</name>
        <dbReference type="ChEBI" id="CHEBI:30616"/>
    </ligand>
</feature>
<feature type="sequence conflict" description="In Ref. 1; CAA50764." evidence="2" ref="1">
    <original>A</original>
    <variation>T</variation>
    <location>
        <position position="94"/>
    </location>
</feature>
<feature type="sequence conflict" description="In Ref. 4; AAF93711." evidence="2" ref="4">
    <original>C</original>
    <variation>Y</variation>
    <location>
        <position position="305"/>
    </location>
</feature>